<name>BGL29_ORYSJ</name>
<comment type="catalytic activity">
    <reaction evidence="2">
        <text>Hydrolysis of terminal, non-reducing beta-D-glucosyl residues with release of beta-D-glucose.</text>
        <dbReference type="EC" id="3.2.1.21"/>
    </reaction>
</comment>
<comment type="similarity">
    <text evidence="8">Belongs to the glycosyl hydrolase 1 family.</text>
</comment>
<comment type="sequence caution" evidence="8">
    <conflict type="erroneous gene model prediction">
        <sequence resource="EMBL-CDS" id="BAF25452"/>
    </conflict>
</comment>
<comment type="sequence caution" evidence="8">
    <conflict type="erroneous gene model prediction">
        <sequence resource="EMBL-CDS" id="EAZ45192"/>
    </conflict>
</comment>
<protein>
    <recommendedName>
        <fullName>Beta-glucosidase 29</fullName>
        <shortName>Os9bglu29</shortName>
        <ecNumber evidence="2">3.2.1.21</ecNumber>
    </recommendedName>
</protein>
<reference key="1">
    <citation type="journal article" date="2005" name="Nature">
        <title>The map-based sequence of the rice genome.</title>
        <authorList>
            <consortium name="International rice genome sequencing project (IRGSP)"/>
        </authorList>
    </citation>
    <scope>NUCLEOTIDE SEQUENCE [LARGE SCALE GENOMIC DNA]</scope>
    <source>
        <strain>cv. Nipponbare</strain>
    </source>
</reference>
<reference key="2">
    <citation type="journal article" date="2008" name="Nucleic Acids Res.">
        <title>The rice annotation project database (RAP-DB): 2008 update.</title>
        <authorList>
            <consortium name="The rice annotation project (RAP)"/>
        </authorList>
    </citation>
    <scope>GENOME REANNOTATION</scope>
    <source>
        <strain>cv. Nipponbare</strain>
    </source>
</reference>
<reference key="3">
    <citation type="journal article" date="2013" name="Rice">
        <title>Improvement of the Oryza sativa Nipponbare reference genome using next generation sequence and optical map data.</title>
        <authorList>
            <person name="Kawahara Y."/>
            <person name="de la Bastide M."/>
            <person name="Hamilton J.P."/>
            <person name="Kanamori H."/>
            <person name="McCombie W.R."/>
            <person name="Ouyang S."/>
            <person name="Schwartz D.C."/>
            <person name="Tanaka T."/>
            <person name="Wu J."/>
            <person name="Zhou S."/>
            <person name="Childs K.L."/>
            <person name="Davidson R.M."/>
            <person name="Lin H."/>
            <person name="Quesada-Ocampo L."/>
            <person name="Vaillancourt B."/>
            <person name="Sakai H."/>
            <person name="Lee S.S."/>
            <person name="Kim J."/>
            <person name="Numa H."/>
            <person name="Itoh T."/>
            <person name="Buell C.R."/>
            <person name="Matsumoto T."/>
        </authorList>
    </citation>
    <scope>GENOME REANNOTATION</scope>
    <source>
        <strain>cv. Nipponbare</strain>
    </source>
</reference>
<reference key="4">
    <citation type="journal article" date="2005" name="PLoS Biol.">
        <title>The genomes of Oryza sativa: a history of duplications.</title>
        <authorList>
            <person name="Yu J."/>
            <person name="Wang J."/>
            <person name="Lin W."/>
            <person name="Li S."/>
            <person name="Li H."/>
            <person name="Zhou J."/>
            <person name="Ni P."/>
            <person name="Dong W."/>
            <person name="Hu S."/>
            <person name="Zeng C."/>
            <person name="Zhang J."/>
            <person name="Zhang Y."/>
            <person name="Li R."/>
            <person name="Xu Z."/>
            <person name="Li S."/>
            <person name="Li X."/>
            <person name="Zheng H."/>
            <person name="Cong L."/>
            <person name="Lin L."/>
            <person name="Yin J."/>
            <person name="Geng J."/>
            <person name="Li G."/>
            <person name="Shi J."/>
            <person name="Liu J."/>
            <person name="Lv H."/>
            <person name="Li J."/>
            <person name="Wang J."/>
            <person name="Deng Y."/>
            <person name="Ran L."/>
            <person name="Shi X."/>
            <person name="Wang X."/>
            <person name="Wu Q."/>
            <person name="Li C."/>
            <person name="Ren X."/>
            <person name="Wang J."/>
            <person name="Wang X."/>
            <person name="Li D."/>
            <person name="Liu D."/>
            <person name="Zhang X."/>
            <person name="Ji Z."/>
            <person name="Zhao W."/>
            <person name="Sun Y."/>
            <person name="Zhang Z."/>
            <person name="Bao J."/>
            <person name="Han Y."/>
            <person name="Dong L."/>
            <person name="Ji J."/>
            <person name="Chen P."/>
            <person name="Wu S."/>
            <person name="Liu J."/>
            <person name="Xiao Y."/>
            <person name="Bu D."/>
            <person name="Tan J."/>
            <person name="Yang L."/>
            <person name="Ye C."/>
            <person name="Zhang J."/>
            <person name="Xu J."/>
            <person name="Zhou Y."/>
            <person name="Yu Y."/>
            <person name="Zhang B."/>
            <person name="Zhuang S."/>
            <person name="Wei H."/>
            <person name="Liu B."/>
            <person name="Lei M."/>
            <person name="Yu H."/>
            <person name="Li Y."/>
            <person name="Xu H."/>
            <person name="Wei S."/>
            <person name="He X."/>
            <person name="Fang L."/>
            <person name="Zhang Z."/>
            <person name="Zhang Y."/>
            <person name="Huang X."/>
            <person name="Su Z."/>
            <person name="Tong W."/>
            <person name="Li J."/>
            <person name="Tong Z."/>
            <person name="Li S."/>
            <person name="Ye J."/>
            <person name="Wang L."/>
            <person name="Fang L."/>
            <person name="Lei T."/>
            <person name="Chen C.-S."/>
            <person name="Chen H.-C."/>
            <person name="Xu Z."/>
            <person name="Li H."/>
            <person name="Huang H."/>
            <person name="Zhang F."/>
            <person name="Xu H."/>
            <person name="Li N."/>
            <person name="Zhao C."/>
            <person name="Li S."/>
            <person name="Dong L."/>
            <person name="Huang Y."/>
            <person name="Li L."/>
            <person name="Xi Y."/>
            <person name="Qi Q."/>
            <person name="Li W."/>
            <person name="Zhang B."/>
            <person name="Hu W."/>
            <person name="Zhang Y."/>
            <person name="Tian X."/>
            <person name="Jiao Y."/>
            <person name="Liang X."/>
            <person name="Jin J."/>
            <person name="Gao L."/>
            <person name="Zheng W."/>
            <person name="Hao B."/>
            <person name="Liu S.-M."/>
            <person name="Wang W."/>
            <person name="Yuan L."/>
            <person name="Cao M."/>
            <person name="McDermott J."/>
            <person name="Samudrala R."/>
            <person name="Wang J."/>
            <person name="Wong G.K.-S."/>
            <person name="Yang H."/>
        </authorList>
    </citation>
    <scope>NUCLEOTIDE SEQUENCE [LARGE SCALE GENOMIC DNA]</scope>
    <source>
        <strain>cv. Nipponbare</strain>
    </source>
</reference>
<reference key="5">
    <citation type="journal article" date="2006" name="BMC Plant Biol.">
        <title>Analysis of rice glycosyl hydrolase family 1 and expression of Os4bglu12 beta-glucosidase.</title>
        <authorList>
            <person name="Opassiri R."/>
            <person name="Pomthong B."/>
            <person name="Onkoksoong T."/>
            <person name="Akiyama T."/>
            <person name="Esen A."/>
            <person name="Ketudat Cairns J.R."/>
        </authorList>
    </citation>
    <scope>GENE FAMILY</scope>
    <scope>NOMENCLATURE</scope>
</reference>
<organism>
    <name type="scientific">Oryza sativa subsp. japonica</name>
    <name type="common">Rice</name>
    <dbReference type="NCBI Taxonomy" id="39947"/>
    <lineage>
        <taxon>Eukaryota</taxon>
        <taxon>Viridiplantae</taxon>
        <taxon>Streptophyta</taxon>
        <taxon>Embryophyta</taxon>
        <taxon>Tracheophyta</taxon>
        <taxon>Spermatophyta</taxon>
        <taxon>Magnoliopsida</taxon>
        <taxon>Liliopsida</taxon>
        <taxon>Poales</taxon>
        <taxon>Poaceae</taxon>
        <taxon>BOP clade</taxon>
        <taxon>Oryzoideae</taxon>
        <taxon>Oryzeae</taxon>
        <taxon>Oryzinae</taxon>
        <taxon>Oryza</taxon>
        <taxon>Oryza sativa</taxon>
    </lineage>
</organism>
<gene>
    <name type="primary">BGLU29</name>
    <name type="ordered locus">Os09g0490400</name>
    <name type="ordered locus">LOC_Os09g31410</name>
    <name type="ORF">OsJ_29835</name>
</gene>
<dbReference type="EC" id="3.2.1.21" evidence="2"/>
<dbReference type="EMBL" id="AP008215">
    <property type="protein sequence ID" value="BAF25452.2"/>
    <property type="status" value="ALT_SEQ"/>
    <property type="molecule type" value="Genomic_DNA"/>
</dbReference>
<dbReference type="EMBL" id="AP014965">
    <property type="protein sequence ID" value="BAT08726.1"/>
    <property type="molecule type" value="Genomic_DNA"/>
</dbReference>
<dbReference type="EMBL" id="CM000146">
    <property type="protein sequence ID" value="EAZ45192.1"/>
    <property type="status" value="ALT_SEQ"/>
    <property type="molecule type" value="Genomic_DNA"/>
</dbReference>
<dbReference type="SMR" id="A3C053"/>
<dbReference type="FunCoup" id="A3C053">
    <property type="interactions" value="201"/>
</dbReference>
<dbReference type="STRING" id="39947.A3C053"/>
<dbReference type="CAZy" id="GH1">
    <property type="family name" value="Glycoside Hydrolase Family 1"/>
</dbReference>
<dbReference type="GlyCosmos" id="A3C053">
    <property type="glycosylation" value="4 sites, No reported glycans"/>
</dbReference>
<dbReference type="PaxDb" id="39947-A3C053"/>
<dbReference type="EnsemblPlants" id="Os09t0490400-00">
    <property type="protein sequence ID" value="Os09t0490400-00"/>
    <property type="gene ID" value="Os09g0490400"/>
</dbReference>
<dbReference type="Gramene" id="Os09t0490400-00">
    <property type="protein sequence ID" value="Os09t0490400-00"/>
    <property type="gene ID" value="Os09g0490400"/>
</dbReference>
<dbReference type="KEGG" id="dosa:Os09g0490400"/>
<dbReference type="eggNOG" id="KOG0626">
    <property type="taxonomic scope" value="Eukaryota"/>
</dbReference>
<dbReference type="HOGENOM" id="CLU_001859_1_0_1"/>
<dbReference type="InParanoid" id="A3C053"/>
<dbReference type="OMA" id="TDIRANT"/>
<dbReference type="Proteomes" id="UP000000763">
    <property type="component" value="Chromosome 9"/>
</dbReference>
<dbReference type="Proteomes" id="UP000007752">
    <property type="component" value="Chromosome 9"/>
</dbReference>
<dbReference type="Proteomes" id="UP000059680">
    <property type="component" value="Chromosome 9"/>
</dbReference>
<dbReference type="GO" id="GO:0033907">
    <property type="term" value="F:beta-D-fucosidase activity"/>
    <property type="evidence" value="ECO:0007669"/>
    <property type="project" value="UniProtKB-ARBA"/>
</dbReference>
<dbReference type="GO" id="GO:0004565">
    <property type="term" value="F:beta-galactosidase activity"/>
    <property type="evidence" value="ECO:0007669"/>
    <property type="project" value="UniProtKB-ARBA"/>
</dbReference>
<dbReference type="GO" id="GO:0008422">
    <property type="term" value="F:beta-glucosidase activity"/>
    <property type="evidence" value="ECO:0000318"/>
    <property type="project" value="GO_Central"/>
</dbReference>
<dbReference type="GO" id="GO:0005975">
    <property type="term" value="P:carbohydrate metabolic process"/>
    <property type="evidence" value="ECO:0007669"/>
    <property type="project" value="InterPro"/>
</dbReference>
<dbReference type="FunFam" id="3.20.20.80:FF:000020">
    <property type="entry name" value="Beta-glucosidase 12"/>
    <property type="match status" value="1"/>
</dbReference>
<dbReference type="Gene3D" id="3.20.20.80">
    <property type="entry name" value="Glycosidases"/>
    <property type="match status" value="1"/>
</dbReference>
<dbReference type="InterPro" id="IPR001360">
    <property type="entry name" value="Glyco_hydro_1"/>
</dbReference>
<dbReference type="InterPro" id="IPR018120">
    <property type="entry name" value="Glyco_hydro_1_AS"/>
</dbReference>
<dbReference type="InterPro" id="IPR033132">
    <property type="entry name" value="Glyco_hydro_1_N_CS"/>
</dbReference>
<dbReference type="InterPro" id="IPR017853">
    <property type="entry name" value="Glycoside_hydrolase_SF"/>
</dbReference>
<dbReference type="PANTHER" id="PTHR10353:SF334">
    <property type="entry name" value="BETA-GLUCOSIDASE 29"/>
    <property type="match status" value="1"/>
</dbReference>
<dbReference type="PANTHER" id="PTHR10353">
    <property type="entry name" value="GLYCOSYL HYDROLASE"/>
    <property type="match status" value="1"/>
</dbReference>
<dbReference type="Pfam" id="PF00232">
    <property type="entry name" value="Glyco_hydro_1"/>
    <property type="match status" value="1"/>
</dbReference>
<dbReference type="PRINTS" id="PR00131">
    <property type="entry name" value="GLHYDRLASE1"/>
</dbReference>
<dbReference type="SUPFAM" id="SSF51445">
    <property type="entry name" value="(Trans)glycosidases"/>
    <property type="match status" value="1"/>
</dbReference>
<dbReference type="PROSITE" id="PS00572">
    <property type="entry name" value="GLYCOSYL_HYDROL_F1_1"/>
    <property type="match status" value="1"/>
</dbReference>
<dbReference type="PROSITE" id="PS00653">
    <property type="entry name" value="GLYCOSYL_HYDROL_F1_2"/>
    <property type="match status" value="1"/>
</dbReference>
<evidence type="ECO:0000250" key="1">
    <source>
        <dbReference type="UniProtKB" id="Q1XH05"/>
    </source>
</evidence>
<evidence type="ECO:0000250" key="2">
    <source>
        <dbReference type="UniProtKB" id="Q75I94"/>
    </source>
</evidence>
<evidence type="ECO:0000250" key="3">
    <source>
        <dbReference type="UniProtKB" id="Q7XSK0"/>
    </source>
</evidence>
<evidence type="ECO:0000250" key="4">
    <source>
        <dbReference type="UniProtKB" id="Q9SPP9"/>
    </source>
</evidence>
<evidence type="ECO:0000255" key="5"/>
<evidence type="ECO:0000255" key="6">
    <source>
        <dbReference type="PROSITE-ProRule" id="PRU00498"/>
    </source>
</evidence>
<evidence type="ECO:0000255" key="7">
    <source>
        <dbReference type="PROSITE-ProRule" id="PRU10055"/>
    </source>
</evidence>
<evidence type="ECO:0000305" key="8"/>
<feature type="signal peptide" evidence="5">
    <location>
        <begin position="1"/>
        <end position="28"/>
    </location>
</feature>
<feature type="chain" id="PRO_0000390346" description="Beta-glucosidase 29">
    <location>
        <begin position="29"/>
        <end position="494"/>
    </location>
</feature>
<feature type="active site" description="Proton donor" evidence="3">
    <location>
        <position position="184"/>
    </location>
</feature>
<feature type="active site" description="Nucleophile" evidence="7">
    <location>
        <position position="398"/>
    </location>
</feature>
<feature type="binding site" evidence="3">
    <location>
        <position position="49"/>
    </location>
    <ligand>
        <name>a beta-D-glucoside</name>
        <dbReference type="ChEBI" id="CHEBI:22798"/>
    </ligand>
</feature>
<feature type="binding site" evidence="3">
    <location>
        <position position="138"/>
    </location>
    <ligand>
        <name>a beta-D-glucoside</name>
        <dbReference type="ChEBI" id="CHEBI:22798"/>
    </ligand>
</feature>
<feature type="binding site" evidence="3">
    <location>
        <begin position="183"/>
        <end position="184"/>
    </location>
    <ligand>
        <name>a beta-D-glucoside</name>
        <dbReference type="ChEBI" id="CHEBI:22798"/>
    </ligand>
</feature>
<feature type="binding site" evidence="3">
    <location>
        <position position="327"/>
    </location>
    <ligand>
        <name>a beta-D-glucoside</name>
        <dbReference type="ChEBI" id="CHEBI:22798"/>
    </ligand>
</feature>
<feature type="binding site" evidence="4">
    <location>
        <position position="398"/>
    </location>
    <ligand>
        <name>a beta-D-glucoside</name>
        <dbReference type="ChEBI" id="CHEBI:22798"/>
    </ligand>
</feature>
<feature type="binding site" evidence="3">
    <location>
        <position position="447"/>
    </location>
    <ligand>
        <name>a beta-D-glucoside</name>
        <dbReference type="ChEBI" id="CHEBI:22798"/>
    </ligand>
</feature>
<feature type="binding site" evidence="3">
    <location>
        <begin position="454"/>
        <end position="455"/>
    </location>
    <ligand>
        <name>a beta-D-glucoside</name>
        <dbReference type="ChEBI" id="CHEBI:22798"/>
    </ligand>
</feature>
<feature type="binding site" evidence="1">
    <location>
        <position position="463"/>
    </location>
    <ligand>
        <name>a beta-D-glucoside</name>
        <dbReference type="ChEBI" id="CHEBI:22798"/>
    </ligand>
</feature>
<feature type="glycosylation site" description="N-linked (GlcNAc...) asparagine" evidence="6">
    <location>
        <position position="103"/>
    </location>
</feature>
<feature type="glycosylation site" description="N-linked (GlcNAc...) asparagine" evidence="6">
    <location>
        <position position="263"/>
    </location>
</feature>
<feature type="glycosylation site" description="N-linked (GlcNAc...) asparagine" evidence="6">
    <location>
        <position position="352"/>
    </location>
</feature>
<feature type="glycosylation site" description="N-linked (GlcNAc...) asparagine" evidence="6">
    <location>
        <position position="406"/>
    </location>
</feature>
<feature type="disulfide bond" evidence="3">
    <location>
        <begin position="203"/>
        <end position="211"/>
    </location>
</feature>
<proteinExistence type="evidence at transcript level"/>
<accession>A3C053</accession>
<accession>A0A0P0XNI9</accession>
<accession>Q0J0P0</accession>
<sequence length="494" mass="56153">MAWLGIGMGRQIVPVLVFVAVLCSGVDASFNRYSFPKDFIFGTGSAAYQYEGAAKEGGKILNGDTGDVADDFYHRYKEDVNLLKDMNMDAFRFSISWSRILPNGTLSGGVNKEGVAFYNNLINEIIAKGMKPFVTIFHWDTPQALESKYGGFLSENIIKDYVDFAEVCFREFGDRVKFWATFNEPWTYCSQGYGTGIHALGRCSPYVSTSCAGGDSSREPYLAAHHVILAHATAVHLYRTKYQPTQHGQIGITAVSHWFVPYNDTAADRRVVQRSLDFMYGWFLDPIVHGDYPGTMRGWLGARLPAFTAEQAAAVRGSYDFIGVNYYTTYYAKSVPLPSSNRLSYDTDIRANTTGFRNGKPIGPQEFTPIFFNYPPGLRELLLYTKRRYNNPIIYVTENGIAEGNNKSLPITEALKDGHRIEFHSKHLQFVNHAIKNGVNVKGYFTWTFMDCFEWGDGYLDRFGLIYIDRLNNLKRYHKQSSYWIANFLKRKKY</sequence>
<keyword id="KW-1015">Disulfide bond</keyword>
<keyword id="KW-0325">Glycoprotein</keyword>
<keyword id="KW-0326">Glycosidase</keyword>
<keyword id="KW-0378">Hydrolase</keyword>
<keyword id="KW-1185">Reference proteome</keyword>
<keyword id="KW-0732">Signal</keyword>